<protein>
    <recommendedName>
        <fullName>Putative imidazole glycerol phosphate synthase subunit hisF2</fullName>
        <ecNumber>4.3.2.10</ecNumber>
    </recommendedName>
    <alternativeName>
        <fullName>IGP synthase cyclase subunit</fullName>
    </alternativeName>
    <alternativeName>
        <fullName>IGP synthase subunit hisF2</fullName>
    </alternativeName>
    <alternativeName>
        <fullName>ImGP synthase subunit hisF2</fullName>
        <shortName>IGPS subunit hisF2</shortName>
    </alternativeName>
</protein>
<name>HIS62_PSEAE</name>
<organism>
    <name type="scientific">Pseudomonas aeruginosa (strain ATCC 15692 / DSM 22644 / CIP 104116 / JCM 14847 / LMG 12228 / 1C / PRS 101 / PAO1)</name>
    <dbReference type="NCBI Taxonomy" id="208964"/>
    <lineage>
        <taxon>Bacteria</taxon>
        <taxon>Pseudomonadati</taxon>
        <taxon>Pseudomonadota</taxon>
        <taxon>Gammaproteobacteria</taxon>
        <taxon>Pseudomonadales</taxon>
        <taxon>Pseudomonadaceae</taxon>
        <taxon>Pseudomonas</taxon>
    </lineage>
</organism>
<evidence type="ECO:0000250" key="1"/>
<evidence type="ECO:0000255" key="2"/>
<evidence type="ECO:0000305" key="3"/>
<accession>P72139</accession>
<accession>Q8KIS2</accession>
<dbReference type="EC" id="4.3.2.10"/>
<dbReference type="EMBL" id="U50396">
    <property type="protein sequence ID" value="AAC45860.1"/>
    <property type="molecule type" value="Genomic_DNA"/>
</dbReference>
<dbReference type="EMBL" id="AF498408">
    <property type="protein sequence ID" value="AAM27665.1"/>
    <property type="molecule type" value="Genomic_DNA"/>
</dbReference>
<dbReference type="EMBL" id="AF498410">
    <property type="protein sequence ID" value="AAM27696.1"/>
    <property type="molecule type" value="Genomic_DNA"/>
</dbReference>
<dbReference type="EMBL" id="AF498412">
    <property type="protein sequence ID" value="AAM27731.1"/>
    <property type="molecule type" value="Genomic_DNA"/>
</dbReference>
<dbReference type="EMBL" id="AF498413">
    <property type="protein sequence ID" value="AAM27751.1"/>
    <property type="molecule type" value="Genomic_DNA"/>
</dbReference>
<dbReference type="EMBL" id="AF498416">
    <property type="protein sequence ID" value="AAM27804.1"/>
    <property type="molecule type" value="Genomic_DNA"/>
</dbReference>
<dbReference type="EMBL" id="AE004091">
    <property type="protein sequence ID" value="AAG06539.1"/>
    <property type="molecule type" value="Genomic_DNA"/>
</dbReference>
<dbReference type="PIR" id="A83251">
    <property type="entry name" value="A83251"/>
</dbReference>
<dbReference type="RefSeq" id="NP_251841.1">
    <property type="nucleotide sequence ID" value="NC_002516.2"/>
</dbReference>
<dbReference type="RefSeq" id="WP_003113421.1">
    <property type="nucleotide sequence ID" value="NZ_QZGE01000023.1"/>
</dbReference>
<dbReference type="SMR" id="P72139"/>
<dbReference type="STRING" id="208964.PA3151"/>
<dbReference type="PaxDb" id="208964-PA3151"/>
<dbReference type="DNASU" id="882582"/>
<dbReference type="GeneID" id="882582"/>
<dbReference type="KEGG" id="pae:PA3151"/>
<dbReference type="PATRIC" id="fig|208964.12.peg.3298"/>
<dbReference type="PseudoCAP" id="PA3151"/>
<dbReference type="HOGENOM" id="CLU_048577_4_0_6"/>
<dbReference type="InParanoid" id="P72139"/>
<dbReference type="OrthoDB" id="9807749at2"/>
<dbReference type="PhylomeDB" id="P72139"/>
<dbReference type="BioCyc" id="PAER208964:G1FZ6-3211-MONOMER"/>
<dbReference type="UniPathway" id="UPA00031">
    <property type="reaction ID" value="UER00010"/>
</dbReference>
<dbReference type="Proteomes" id="UP000002438">
    <property type="component" value="Chromosome"/>
</dbReference>
<dbReference type="GO" id="GO:0005737">
    <property type="term" value="C:cytoplasm"/>
    <property type="evidence" value="ECO:0007669"/>
    <property type="project" value="UniProtKB-SubCell"/>
</dbReference>
<dbReference type="GO" id="GO:0000107">
    <property type="term" value="F:imidazoleglycerol-phosphate synthase activity"/>
    <property type="evidence" value="ECO:0000318"/>
    <property type="project" value="GO_Central"/>
</dbReference>
<dbReference type="GO" id="GO:0016833">
    <property type="term" value="F:oxo-acid-lyase activity"/>
    <property type="evidence" value="ECO:0007669"/>
    <property type="project" value="InterPro"/>
</dbReference>
<dbReference type="GO" id="GO:0000105">
    <property type="term" value="P:L-histidine biosynthetic process"/>
    <property type="evidence" value="ECO:0007669"/>
    <property type="project" value="UniProtKB-UniPathway"/>
</dbReference>
<dbReference type="GO" id="GO:0009243">
    <property type="term" value="P:O antigen biosynthetic process"/>
    <property type="evidence" value="ECO:0000269"/>
    <property type="project" value="PseudoCAP"/>
</dbReference>
<dbReference type="CDD" id="cd04731">
    <property type="entry name" value="HisF"/>
    <property type="match status" value="1"/>
</dbReference>
<dbReference type="Gene3D" id="3.20.20.70">
    <property type="entry name" value="Aldolase class I"/>
    <property type="match status" value="1"/>
</dbReference>
<dbReference type="InterPro" id="IPR013785">
    <property type="entry name" value="Aldolase_TIM"/>
</dbReference>
<dbReference type="InterPro" id="IPR020021">
    <property type="entry name" value="Glycosyl_amidation-assoc_WbuZ"/>
</dbReference>
<dbReference type="InterPro" id="IPR006062">
    <property type="entry name" value="His_biosynth"/>
</dbReference>
<dbReference type="InterPro" id="IPR004651">
    <property type="entry name" value="HisF"/>
</dbReference>
<dbReference type="InterPro" id="IPR050064">
    <property type="entry name" value="IGPS_HisA/HisF"/>
</dbReference>
<dbReference type="InterPro" id="IPR011060">
    <property type="entry name" value="RibuloseP-bd_barrel"/>
</dbReference>
<dbReference type="NCBIfam" id="NF038364">
    <property type="entry name" value="AglZ_HisF2_fam"/>
    <property type="match status" value="1"/>
</dbReference>
<dbReference type="NCBIfam" id="TIGR03572">
    <property type="entry name" value="WbuZ"/>
    <property type="match status" value="1"/>
</dbReference>
<dbReference type="PANTHER" id="PTHR21235:SF2">
    <property type="entry name" value="IMIDAZOLE GLYCEROL PHOSPHATE SYNTHASE HISHF"/>
    <property type="match status" value="1"/>
</dbReference>
<dbReference type="PANTHER" id="PTHR21235">
    <property type="entry name" value="IMIDAZOLE GLYCEROL PHOSPHATE SYNTHASE SUBUNIT HISF/H IGP SYNTHASE SUBUNIT HISF/H"/>
    <property type="match status" value="1"/>
</dbReference>
<dbReference type="Pfam" id="PF00977">
    <property type="entry name" value="His_biosynth"/>
    <property type="match status" value="1"/>
</dbReference>
<dbReference type="SUPFAM" id="SSF51366">
    <property type="entry name" value="Ribulose-phoshate binding barrel"/>
    <property type="match status" value="1"/>
</dbReference>
<keyword id="KW-0028">Amino-acid biosynthesis</keyword>
<keyword id="KW-0963">Cytoplasm</keyword>
<keyword id="KW-0368">Histidine biosynthesis</keyword>
<keyword id="KW-0456">Lyase</keyword>
<keyword id="KW-1185">Reference proteome</keyword>
<comment type="function">
    <text evidence="1">IGPS catalyzes the conversion of PRFAR and glutamine to IGP, AICAR and glutamate. The HisF subunit catalyzes the cyclization activity that produces IGP and AICAR from PRFAR using the ammonia provided by the HisH subunit (By similarity).</text>
</comment>
<comment type="catalytic activity">
    <reaction>
        <text>5-[(5-phospho-1-deoxy-D-ribulos-1-ylimino)methylamino]-1-(5-phospho-beta-D-ribosyl)imidazole-4-carboxamide + L-glutamine = D-erythro-1-(imidazol-4-yl)glycerol 3-phosphate + 5-amino-1-(5-phospho-beta-D-ribosyl)imidazole-4-carboxamide + L-glutamate + H(+)</text>
        <dbReference type="Rhea" id="RHEA:24793"/>
        <dbReference type="ChEBI" id="CHEBI:15378"/>
        <dbReference type="ChEBI" id="CHEBI:29985"/>
        <dbReference type="ChEBI" id="CHEBI:58278"/>
        <dbReference type="ChEBI" id="CHEBI:58359"/>
        <dbReference type="ChEBI" id="CHEBI:58475"/>
        <dbReference type="ChEBI" id="CHEBI:58525"/>
        <dbReference type="EC" id="4.3.2.10"/>
    </reaction>
</comment>
<comment type="pathway">
    <text>Amino-acid biosynthesis; L-histidine biosynthesis; L-histidine from 5-phospho-alpha-D-ribose 1-diphosphate: step 5/9.</text>
</comment>
<comment type="subunit">
    <text evidence="1">Heterodimer of HisH and HisF.</text>
</comment>
<comment type="subcellular location">
    <subcellularLocation>
        <location evidence="1">Cytoplasm</location>
    </subcellularLocation>
</comment>
<comment type="similarity">
    <text evidence="3">Belongs to the HisA/HisF family.</text>
</comment>
<comment type="caution">
    <text evidence="3">The potential active site Asp residue in position 11 is replaced by a Leu.</text>
</comment>
<feature type="chain" id="PRO_0000142207" description="Putative imidazole glycerol phosphate synthase subunit hisF2">
    <location>
        <begin position="1"/>
        <end position="251"/>
    </location>
</feature>
<feature type="active site" evidence="2">
    <location>
        <position position="130"/>
    </location>
</feature>
<feature type="sequence variant" description="In strain: Serotype O16.">
    <original>K</original>
    <variation>R</variation>
    <location>
        <position position="22"/>
    </location>
</feature>
<feature type="sequence variant" description="In strain: Serotype O16.">
    <original>L</original>
    <variation>I</variation>
    <location>
        <position position="110"/>
    </location>
</feature>
<feature type="sequence variant" description="In strain: Serotype O16.">
    <original>G</original>
    <variation>S</variation>
    <location>
        <position position="134"/>
    </location>
</feature>
<sequence length="251" mass="27449">MVRRRVIPCLLLKDRGLVKTVKFKEPKYVGDPINAIRIFNEKEVDELILLDIDASRLNQEPNYELIAEVAGECFMPICYGGGIKTLEHAEKIFSLGVEKVSINTAALMDLSLIRRIADKFGSQSVVGSIDCRKGFWGGHSVFSENGTRDMKRSPLEWAQALEEAGVGEIFLNSIDRDGVQKGFDNALVENIASNVHVPVIACGGAGSIADLIDLFERTCVSAVAAGSLFVFHGKHRAVLISYPDVNKLDVG</sequence>
<proteinExistence type="inferred from homology"/>
<reference key="1">
    <citation type="journal article" date="1996" name="Mol. Microbiol.">
        <title>Molecular characterization of the Pseudomonas aeruginosa serotype O5 (PAO1) B-band lipopolysaccharide gene cluster.</title>
        <authorList>
            <person name="Burrows L.L."/>
            <person name="Charter D.F."/>
            <person name="Lam J.S."/>
        </authorList>
    </citation>
    <scope>NUCLEOTIDE SEQUENCE [GENOMIC DNA]</scope>
    <source>
        <strain>ATCC 15692 / DSM 22644 / CIP 104116 / JCM 14847 / LMG 12228 / 1C / PRS 101 / PAO1</strain>
    </source>
</reference>
<reference key="2">
    <citation type="journal article" date="2002" name="J. Bacteriol.">
        <title>Genetic variation at the O-antigen biosynthetic locus in Pseudomonas aeruginosa.</title>
        <authorList>
            <person name="Raymond C.K."/>
            <person name="Sims E.H."/>
            <person name="Kas A."/>
            <person name="Spencer D.H."/>
            <person name="Kutyavin T.V."/>
            <person name="Ivey R.G."/>
            <person name="Zhou Y."/>
            <person name="Kaul R."/>
            <person name="Clendenning J.B."/>
            <person name="Olson M.V."/>
        </authorList>
    </citation>
    <scope>NUCLEOTIDE SEQUENCE [GENOMIC DNA]</scope>
    <source>
        <strain>Serotype O16</strain>
        <strain>Serotype O18</strain>
        <strain>Serotype O2</strain>
        <strain>Serotype O20</strain>
        <strain>Serotype O5</strain>
    </source>
</reference>
<reference key="3">
    <citation type="journal article" date="2000" name="Nature">
        <title>Complete genome sequence of Pseudomonas aeruginosa PAO1, an opportunistic pathogen.</title>
        <authorList>
            <person name="Stover C.K."/>
            <person name="Pham X.-Q.T."/>
            <person name="Erwin A.L."/>
            <person name="Mizoguchi S.D."/>
            <person name="Warrener P."/>
            <person name="Hickey M.J."/>
            <person name="Brinkman F.S.L."/>
            <person name="Hufnagle W.O."/>
            <person name="Kowalik D.J."/>
            <person name="Lagrou M."/>
            <person name="Garber R.L."/>
            <person name="Goltry L."/>
            <person name="Tolentino E."/>
            <person name="Westbrock-Wadman S."/>
            <person name="Yuan Y."/>
            <person name="Brody L.L."/>
            <person name="Coulter S.N."/>
            <person name="Folger K.R."/>
            <person name="Kas A."/>
            <person name="Larbig K."/>
            <person name="Lim R.M."/>
            <person name="Smith K.A."/>
            <person name="Spencer D.H."/>
            <person name="Wong G.K.-S."/>
            <person name="Wu Z."/>
            <person name="Paulsen I.T."/>
            <person name="Reizer J."/>
            <person name="Saier M.H. Jr."/>
            <person name="Hancock R.E.W."/>
            <person name="Lory S."/>
            <person name="Olson M.V."/>
        </authorList>
    </citation>
    <scope>NUCLEOTIDE SEQUENCE [LARGE SCALE GENOMIC DNA]</scope>
    <source>
        <strain>ATCC 15692 / DSM 22644 / CIP 104116 / JCM 14847 / LMG 12228 / 1C / PRS 101 / PAO1</strain>
    </source>
</reference>
<gene>
    <name type="primary">hisF2</name>
    <name type="ordered locus">PA3151</name>
</gene>